<sequence length="432" mass="48121">MTTTIRQFTSSSSIKGSSGLGGGSSRTSCRLSGGLGAGSCRLGSAGGLGSTLGGSSYSSCYSFGSGGGYGSSFGGVDGLLAGGEKATMQNLNDRLASYLDKVRALEEANTELEVKIRDWYQRQAPGPARDYSQYYRTIEELQNKILTATVDNANILLQIDNARLAADDFRTKFETEQALRLSVEADINGLRRVLDELTLARADLEMQIENLKEELAYLKKNHEEEMNALRGQVGGEINVEMDAAPGVDLSRILNEMRDQYEKMAEKNRKDAEDWFFSKTEELNREVATNSELVQSGESEISELRRTMQALEIELQSQLSMKASLEGNLAETENRYCVQLSQIQGLIGSVEEQLAQLRCEMEQQNQEYKILLDVKTRLEQEIATYRRLLEGEDAHLTQYKKEPVTTRQVRTIVEEVQDGKVISSREQVHQTTR</sequence>
<feature type="chain" id="PRO_0000310578" description="Keratin, type I cytoskeletal 17">
    <location>
        <begin position="1"/>
        <end position="432"/>
    </location>
</feature>
<feature type="domain" description="IF rod" evidence="7">
    <location>
        <begin position="84"/>
        <end position="395"/>
    </location>
</feature>
<feature type="region of interest" description="Head">
    <location>
        <begin position="1"/>
        <end position="83"/>
    </location>
</feature>
<feature type="region of interest" description="Disordered" evidence="8">
    <location>
        <begin position="1"/>
        <end position="24"/>
    </location>
</feature>
<feature type="region of interest" description="Coil 1A" evidence="6">
    <location>
        <begin position="84"/>
        <end position="120"/>
    </location>
</feature>
<feature type="region of interest" description="Linker 1" evidence="6">
    <location>
        <begin position="121"/>
        <end position="138"/>
    </location>
</feature>
<feature type="region of interest" description="Coil 1B" evidence="6">
    <location>
        <begin position="139"/>
        <end position="230"/>
    </location>
</feature>
<feature type="region of interest" description="Linker 12" evidence="6">
    <location>
        <begin position="231"/>
        <end position="250"/>
    </location>
</feature>
<feature type="region of interest" description="Coil 2" evidence="6">
    <location>
        <begin position="251"/>
        <end position="392"/>
    </location>
</feature>
<feature type="region of interest" description="Tail" evidence="6">
    <location>
        <begin position="393"/>
        <end position="432"/>
    </location>
</feature>
<feature type="modified residue" description="Phosphoserine" evidence="2">
    <location>
        <position position="12"/>
    </location>
</feature>
<feature type="modified residue" description="Phosphoserine" evidence="2">
    <location>
        <position position="13"/>
    </location>
</feature>
<feature type="modified residue" description="Phosphoserine" evidence="3">
    <location>
        <position position="25"/>
    </location>
</feature>
<feature type="modified residue" description="Phosphoserine" evidence="2">
    <location>
        <position position="32"/>
    </location>
</feature>
<feature type="modified residue" description="Phosphoserine" evidence="2">
    <location>
        <position position="39"/>
    </location>
</feature>
<feature type="modified residue" description="Phosphoserine; by RPS6KA1" evidence="2">
    <location>
        <position position="44"/>
    </location>
</feature>
<feature type="modified residue" description="Phosphothreonine" evidence="2">
    <location>
        <position position="110"/>
    </location>
</feature>
<feature type="modified residue" description="Phosphothreonine" evidence="4">
    <location>
        <position position="279"/>
    </location>
</feature>
<feature type="modified residue" description="Phosphoserine" evidence="2">
    <location>
        <position position="323"/>
    </location>
</feature>
<feature type="cross-link" description="Glycyl lysine isopeptide (Lys-Gly) (interchain with G-Cter in SUMO1); alternate" evidence="2">
    <location>
        <position position="15"/>
    </location>
</feature>
<feature type="cross-link" description="Glycyl lysine isopeptide (Lys-Gly) (interchain with G-Cter in SUMO2); alternate" evidence="2">
    <location>
        <position position="15"/>
    </location>
</feature>
<feature type="cross-link" description="Glycyl lysine isopeptide (Lys-Gly) (interchain with G-Cter in SUMO2)" evidence="2">
    <location>
        <position position="278"/>
    </location>
</feature>
<feature type="cross-link" description="Glycyl lysine isopeptide (Lys-Gly) (interchain with G-Cter in SUMO1); alternate" evidence="2">
    <location>
        <position position="399"/>
    </location>
</feature>
<feature type="cross-link" description="Glycyl lysine isopeptide (Lys-Gly) (interchain with G-Cter in SUMO2); alternate" evidence="2">
    <location>
        <position position="399"/>
    </location>
</feature>
<feature type="cross-link" description="Glycyl lysine isopeptide (Lys-Gly) (interchain with G-Cter in SUMO1); alternate" evidence="2">
    <location>
        <position position="400"/>
    </location>
</feature>
<feature type="cross-link" description="Glycyl lysine isopeptide (Lys-Gly) (interchain with G-Cter in SUMO2); alternate" evidence="2">
    <location>
        <position position="400"/>
    </location>
</feature>
<feature type="cross-link" description="Glycyl lysine isopeptide (Lys-Gly) (interchain with G-Cter in SUMO1); alternate" evidence="2">
    <location>
        <position position="419"/>
    </location>
</feature>
<feature type="cross-link" description="Glycyl lysine isopeptide (Lys-Gly) (interchain with G-Cter in SUMO2); alternate" evidence="2">
    <location>
        <position position="419"/>
    </location>
</feature>
<name>K1C17_PANTR</name>
<dbReference type="EMBL" id="AB222148">
    <property type="protein sequence ID" value="BAF62393.1"/>
    <property type="molecule type" value="mRNA"/>
</dbReference>
<dbReference type="RefSeq" id="NP_001138309.1">
    <property type="nucleotide sequence ID" value="NM_001144837.2"/>
</dbReference>
<dbReference type="SMR" id="A5A6M0"/>
<dbReference type="STRING" id="9598.ENSPTRP00000015625"/>
<dbReference type="PaxDb" id="9598-ENSPTRP00000015625"/>
<dbReference type="GeneID" id="468261"/>
<dbReference type="KEGG" id="ptr:468261"/>
<dbReference type="CTD" id="3872"/>
<dbReference type="eggNOG" id="ENOG502QTM6">
    <property type="taxonomic scope" value="Eukaryota"/>
</dbReference>
<dbReference type="InParanoid" id="A5A6M0"/>
<dbReference type="OrthoDB" id="13677at9604"/>
<dbReference type="Proteomes" id="UP000002277">
    <property type="component" value="Unplaced"/>
</dbReference>
<dbReference type="GO" id="GO:0005737">
    <property type="term" value="C:cytoplasm"/>
    <property type="evidence" value="ECO:0007669"/>
    <property type="project" value="UniProtKB-SubCell"/>
</dbReference>
<dbReference type="GO" id="GO:0005856">
    <property type="term" value="C:cytoskeleton"/>
    <property type="evidence" value="ECO:0000318"/>
    <property type="project" value="GO_Central"/>
</dbReference>
<dbReference type="GO" id="GO:0005882">
    <property type="term" value="C:intermediate filament"/>
    <property type="evidence" value="ECO:0007669"/>
    <property type="project" value="UniProtKB-KW"/>
</dbReference>
<dbReference type="GO" id="GO:0005198">
    <property type="term" value="F:structural molecule activity"/>
    <property type="evidence" value="ECO:0007669"/>
    <property type="project" value="InterPro"/>
</dbReference>
<dbReference type="GO" id="GO:0030855">
    <property type="term" value="P:epithelial cell differentiation"/>
    <property type="evidence" value="ECO:0000318"/>
    <property type="project" value="GO_Central"/>
</dbReference>
<dbReference type="GO" id="GO:0031069">
    <property type="term" value="P:hair follicle morphogenesis"/>
    <property type="evidence" value="ECO:0000250"/>
    <property type="project" value="UniProtKB"/>
</dbReference>
<dbReference type="GO" id="GO:0045109">
    <property type="term" value="P:intermediate filament organization"/>
    <property type="evidence" value="ECO:0000318"/>
    <property type="project" value="GO_Central"/>
</dbReference>
<dbReference type="FunFam" id="1.20.5.1160:FF:000002">
    <property type="entry name" value="Type I keratin 10"/>
    <property type="match status" value="1"/>
</dbReference>
<dbReference type="FunFam" id="1.20.5.170:FF:000002">
    <property type="entry name" value="Type I keratin KA11"/>
    <property type="match status" value="1"/>
</dbReference>
<dbReference type="FunFam" id="1.20.5.500:FF:000001">
    <property type="entry name" value="Type II keratin 23"/>
    <property type="match status" value="1"/>
</dbReference>
<dbReference type="Gene3D" id="1.20.5.170">
    <property type="match status" value="1"/>
</dbReference>
<dbReference type="Gene3D" id="1.20.5.500">
    <property type="entry name" value="Single helix bin"/>
    <property type="match status" value="1"/>
</dbReference>
<dbReference type="Gene3D" id="1.20.5.1160">
    <property type="entry name" value="Vasodilator-stimulated phosphoprotein"/>
    <property type="match status" value="1"/>
</dbReference>
<dbReference type="InterPro" id="IPR018039">
    <property type="entry name" value="IF_conserved"/>
</dbReference>
<dbReference type="InterPro" id="IPR039008">
    <property type="entry name" value="IF_rod_dom"/>
</dbReference>
<dbReference type="InterPro" id="IPR002957">
    <property type="entry name" value="Keratin_I"/>
</dbReference>
<dbReference type="PANTHER" id="PTHR23239">
    <property type="entry name" value="INTERMEDIATE FILAMENT"/>
    <property type="match status" value="1"/>
</dbReference>
<dbReference type="PANTHER" id="PTHR23239:SF180">
    <property type="entry name" value="KERATIN, TYPE I CYTOSKELETAL 17"/>
    <property type="match status" value="1"/>
</dbReference>
<dbReference type="Pfam" id="PF00038">
    <property type="entry name" value="Filament"/>
    <property type="match status" value="1"/>
</dbReference>
<dbReference type="PRINTS" id="PR01248">
    <property type="entry name" value="TYPE1KERATIN"/>
</dbReference>
<dbReference type="SMART" id="SM01391">
    <property type="entry name" value="Filament"/>
    <property type="match status" value="1"/>
</dbReference>
<dbReference type="SUPFAM" id="SSF64593">
    <property type="entry name" value="Intermediate filament protein, coiled coil region"/>
    <property type="match status" value="2"/>
</dbReference>
<dbReference type="SUPFAM" id="SSF46579">
    <property type="entry name" value="Prefoldin"/>
    <property type="match status" value="1"/>
</dbReference>
<dbReference type="PROSITE" id="PS00226">
    <property type="entry name" value="IF_ROD_1"/>
    <property type="match status" value="1"/>
</dbReference>
<dbReference type="PROSITE" id="PS51842">
    <property type="entry name" value="IF_ROD_2"/>
    <property type="match status" value="1"/>
</dbReference>
<proteinExistence type="evidence at transcript level"/>
<evidence type="ECO:0000250" key="1"/>
<evidence type="ECO:0000250" key="2">
    <source>
        <dbReference type="UniProtKB" id="Q04695"/>
    </source>
</evidence>
<evidence type="ECO:0000250" key="3">
    <source>
        <dbReference type="UniProtKB" id="Q61414"/>
    </source>
</evidence>
<evidence type="ECO:0000250" key="4">
    <source>
        <dbReference type="UniProtKB" id="Q6IFV3"/>
    </source>
</evidence>
<evidence type="ECO:0000250" key="5">
    <source>
        <dbReference type="UniProtKB" id="Q9QWL7"/>
    </source>
</evidence>
<evidence type="ECO:0000255" key="6"/>
<evidence type="ECO:0000255" key="7">
    <source>
        <dbReference type="PROSITE-ProRule" id="PRU01188"/>
    </source>
</evidence>
<evidence type="ECO:0000256" key="8">
    <source>
        <dbReference type="SAM" id="MobiDB-lite"/>
    </source>
</evidence>
<evidence type="ECO:0000305" key="9"/>
<evidence type="ECO:0000312" key="10">
    <source>
        <dbReference type="EMBL" id="BAF62393.1"/>
    </source>
</evidence>
<protein>
    <recommendedName>
        <fullName>Keratin, type I cytoskeletal 17</fullName>
    </recommendedName>
    <alternativeName>
        <fullName>Cytokeratin-17</fullName>
        <shortName>CK-17</shortName>
    </alternativeName>
    <alternativeName>
        <fullName>Keratin-17</fullName>
        <shortName>K17</shortName>
    </alternativeName>
</protein>
<comment type="function">
    <text evidence="2 5">Type I keratin involved in the formation and maintenance of various skin appendages, specifically in determining shape and orientation of hair. Required for the correct growth of hair follicles, in particular for the persistence of the anagen (growth) state. Modulates the function of TNF-alpha in the specific context of hair cycling. Regulates protein synthesis and epithelial cell growth through binding to the adapter protein SFN and by stimulating Akt/mTOR pathway. Involved in tissue repair. May be a marker of basal cell differentiation in complex epithelia and therefore indicative of a certain type of epithelial 'stem cells'. Acts as a promoter of epithelial proliferation by acting a regulator of immune response in skin: promotes Th1/Th17-dominated immune environment contributing to the development of basaloid skin tumors. May act as an autoantigen in the immunopathogenesis of psoriasis, with certain peptide regions being a major target for autoreactive T-cells and hence causing their proliferation.</text>
</comment>
<comment type="subunit">
    <text evidence="5 9">Heterodimer of a type I and a type II keratin. KRT17 associates with KRT6 isomers (KRT6A or KRT6B). Interacts with TRADD and SFN (By similarity).</text>
</comment>
<comment type="subcellular location">
    <subcellularLocation>
        <location evidence="5">Cytoplasm</location>
    </subcellularLocation>
</comment>
<comment type="PTM">
    <text evidence="1">Phosphorylation at Ser-44 occurs in a growth- and stress-dependent fashion in skin keratinocytes, it has no effect on filament organization.</text>
</comment>
<comment type="miscellaneous">
    <text evidence="9">There are two types of cytoskeletal and microfibrillar keratin: I (acidic; 40-55 kDa) and II (neutral to basic; 56-70 kDa).</text>
</comment>
<comment type="similarity">
    <text evidence="7">Belongs to the intermediate filament family.</text>
</comment>
<reference evidence="10" key="1">
    <citation type="journal article" date="2007" name="Gene">
        <title>Mapping of chimpanzee full-length cDNAs onto the human genome unveils large potential divergence of the transcriptome.</title>
        <authorList>
            <person name="Sakate R."/>
            <person name="Suto Y."/>
            <person name="Imanishi T."/>
            <person name="Tanoue T."/>
            <person name="Hida M."/>
            <person name="Hayasaka I."/>
            <person name="Kusuda J."/>
            <person name="Gojobori T."/>
            <person name="Hashimoto K."/>
            <person name="Hirai M."/>
        </authorList>
    </citation>
    <scope>NUCLEOTIDE SEQUENCE [MRNA]</scope>
    <source>
        <tissue evidence="10">Skin</tissue>
    </source>
</reference>
<keyword id="KW-0175">Coiled coil</keyword>
<keyword id="KW-0963">Cytoplasm</keyword>
<keyword id="KW-0403">Intermediate filament</keyword>
<keyword id="KW-1017">Isopeptide bond</keyword>
<keyword id="KW-0416">Keratin</keyword>
<keyword id="KW-0597">Phosphoprotein</keyword>
<keyword id="KW-1185">Reference proteome</keyword>
<keyword id="KW-0832">Ubl conjugation</keyword>
<organism>
    <name type="scientific">Pan troglodytes</name>
    <name type="common">Chimpanzee</name>
    <dbReference type="NCBI Taxonomy" id="9598"/>
    <lineage>
        <taxon>Eukaryota</taxon>
        <taxon>Metazoa</taxon>
        <taxon>Chordata</taxon>
        <taxon>Craniata</taxon>
        <taxon>Vertebrata</taxon>
        <taxon>Euteleostomi</taxon>
        <taxon>Mammalia</taxon>
        <taxon>Eutheria</taxon>
        <taxon>Euarchontoglires</taxon>
        <taxon>Primates</taxon>
        <taxon>Haplorrhini</taxon>
        <taxon>Catarrhini</taxon>
        <taxon>Hominidae</taxon>
        <taxon>Pan</taxon>
    </lineage>
</organism>
<gene>
    <name evidence="10" type="primary">KRT17</name>
</gene>
<accession>A5A6M0</accession>